<organism>
    <name type="scientific">Escherichia coli O1:K1 / APEC</name>
    <dbReference type="NCBI Taxonomy" id="405955"/>
    <lineage>
        <taxon>Bacteria</taxon>
        <taxon>Pseudomonadati</taxon>
        <taxon>Pseudomonadota</taxon>
        <taxon>Gammaproteobacteria</taxon>
        <taxon>Enterobacterales</taxon>
        <taxon>Enterobacteriaceae</taxon>
        <taxon>Escherichia</taxon>
    </lineage>
</organism>
<reference key="1">
    <citation type="journal article" date="2007" name="J. Bacteriol.">
        <title>The genome sequence of avian pathogenic Escherichia coli strain O1:K1:H7 shares strong similarities with human extraintestinal pathogenic E. coli genomes.</title>
        <authorList>
            <person name="Johnson T.J."/>
            <person name="Kariyawasam S."/>
            <person name="Wannemuehler Y."/>
            <person name="Mangiamele P."/>
            <person name="Johnson S.J."/>
            <person name="Doetkott C."/>
            <person name="Skyberg J.A."/>
            <person name="Lynne A.M."/>
            <person name="Johnson J.R."/>
            <person name="Nolan L.K."/>
        </authorList>
    </citation>
    <scope>NUCLEOTIDE SEQUENCE [LARGE SCALE GENOMIC DNA]</scope>
</reference>
<sequence>MRLCDRDIEAWLDEGRLSINPRPPVERINGATVDVRLGNKFRTFRGHTAAFIDLSGPKDEVSAALDRVMSDEIVLDESEAFYLHPGELALAVTLESVTLPADLVGWLDGRSSLARLGLMVHVTAHRIDPGWSGCIVLEFYNSGKLPLALRPGMLIGALSFEPLSGPAARPYNRREDAKYRNQQGAVASRIDKD</sequence>
<comment type="function">
    <text evidence="1">Catalyzes the deamination of dCTP to dUTP.</text>
</comment>
<comment type="catalytic activity">
    <reaction evidence="1">
        <text>dCTP + H2O + H(+) = dUTP + NH4(+)</text>
        <dbReference type="Rhea" id="RHEA:22680"/>
        <dbReference type="ChEBI" id="CHEBI:15377"/>
        <dbReference type="ChEBI" id="CHEBI:15378"/>
        <dbReference type="ChEBI" id="CHEBI:28938"/>
        <dbReference type="ChEBI" id="CHEBI:61481"/>
        <dbReference type="ChEBI" id="CHEBI:61555"/>
        <dbReference type="EC" id="3.5.4.13"/>
    </reaction>
</comment>
<comment type="pathway">
    <text evidence="1">Pyrimidine metabolism; dUMP biosynthesis; dUMP from dCTP (dUTP route): step 1/2.</text>
</comment>
<comment type="subunit">
    <text evidence="1">Homotrimer.</text>
</comment>
<comment type="similarity">
    <text evidence="1">Belongs to the dCTP deaminase family.</text>
</comment>
<evidence type="ECO:0000255" key="1">
    <source>
        <dbReference type="HAMAP-Rule" id="MF_00146"/>
    </source>
</evidence>
<evidence type="ECO:0000256" key="2">
    <source>
        <dbReference type="SAM" id="MobiDB-lite"/>
    </source>
</evidence>
<gene>
    <name evidence="1" type="primary">dcd</name>
    <name type="ordered locus">Ecok1_19670</name>
    <name type="ORF">APECO1_1156</name>
</gene>
<proteinExistence type="inferred from homology"/>
<accession>A1ACS1</accession>
<dbReference type="EC" id="3.5.4.13" evidence="1"/>
<dbReference type="EMBL" id="CP000468">
    <property type="protein sequence ID" value="ABJ01461.1"/>
    <property type="molecule type" value="Genomic_DNA"/>
</dbReference>
<dbReference type="RefSeq" id="WP_001234777.1">
    <property type="nucleotide sequence ID" value="NZ_CADILS010000029.1"/>
</dbReference>
<dbReference type="SMR" id="A1ACS1"/>
<dbReference type="KEGG" id="ecv:APECO1_1156"/>
<dbReference type="HOGENOM" id="CLU_087476_2_0_6"/>
<dbReference type="UniPathway" id="UPA00610">
    <property type="reaction ID" value="UER00665"/>
</dbReference>
<dbReference type="Proteomes" id="UP000008216">
    <property type="component" value="Chromosome"/>
</dbReference>
<dbReference type="GO" id="GO:0008829">
    <property type="term" value="F:dCTP deaminase activity"/>
    <property type="evidence" value="ECO:0007669"/>
    <property type="project" value="UniProtKB-UniRule"/>
</dbReference>
<dbReference type="GO" id="GO:0000166">
    <property type="term" value="F:nucleotide binding"/>
    <property type="evidence" value="ECO:0007669"/>
    <property type="project" value="UniProtKB-KW"/>
</dbReference>
<dbReference type="GO" id="GO:0006226">
    <property type="term" value="P:dUMP biosynthetic process"/>
    <property type="evidence" value="ECO:0007669"/>
    <property type="project" value="UniProtKB-UniPathway"/>
</dbReference>
<dbReference type="GO" id="GO:0006229">
    <property type="term" value="P:dUTP biosynthetic process"/>
    <property type="evidence" value="ECO:0007669"/>
    <property type="project" value="UniProtKB-UniRule"/>
</dbReference>
<dbReference type="GO" id="GO:0015949">
    <property type="term" value="P:nucleobase-containing small molecule interconversion"/>
    <property type="evidence" value="ECO:0007669"/>
    <property type="project" value="TreeGrafter"/>
</dbReference>
<dbReference type="CDD" id="cd07557">
    <property type="entry name" value="trimeric_dUTPase"/>
    <property type="match status" value="1"/>
</dbReference>
<dbReference type="FunFam" id="2.70.40.10:FF:000003">
    <property type="entry name" value="dCTP deaminase"/>
    <property type="match status" value="1"/>
</dbReference>
<dbReference type="Gene3D" id="2.70.40.10">
    <property type="match status" value="1"/>
</dbReference>
<dbReference type="HAMAP" id="MF_00146">
    <property type="entry name" value="dCTP_deaminase"/>
    <property type="match status" value="1"/>
</dbReference>
<dbReference type="InterPro" id="IPR011962">
    <property type="entry name" value="dCTP_deaminase"/>
</dbReference>
<dbReference type="InterPro" id="IPR036157">
    <property type="entry name" value="dUTPase-like_sf"/>
</dbReference>
<dbReference type="InterPro" id="IPR033704">
    <property type="entry name" value="dUTPase_trimeric"/>
</dbReference>
<dbReference type="NCBIfam" id="TIGR02274">
    <property type="entry name" value="dCTP_deam"/>
    <property type="match status" value="1"/>
</dbReference>
<dbReference type="PANTHER" id="PTHR42680">
    <property type="entry name" value="DCTP DEAMINASE"/>
    <property type="match status" value="1"/>
</dbReference>
<dbReference type="PANTHER" id="PTHR42680:SF3">
    <property type="entry name" value="DCTP DEAMINASE"/>
    <property type="match status" value="1"/>
</dbReference>
<dbReference type="Pfam" id="PF22769">
    <property type="entry name" value="DCD"/>
    <property type="match status" value="1"/>
</dbReference>
<dbReference type="SUPFAM" id="SSF51283">
    <property type="entry name" value="dUTPase-like"/>
    <property type="match status" value="1"/>
</dbReference>
<protein>
    <recommendedName>
        <fullName evidence="1">dCTP deaminase</fullName>
        <ecNumber evidence="1">3.5.4.13</ecNumber>
    </recommendedName>
    <alternativeName>
        <fullName evidence="1">Deoxycytidine triphosphate deaminase</fullName>
    </alternativeName>
</protein>
<feature type="chain" id="PRO_1000009716" description="dCTP deaminase">
    <location>
        <begin position="1"/>
        <end position="193"/>
    </location>
</feature>
<feature type="region of interest" description="Disordered" evidence="2">
    <location>
        <begin position="169"/>
        <end position="193"/>
    </location>
</feature>
<feature type="active site" description="Proton donor/acceptor" evidence="1">
    <location>
        <position position="138"/>
    </location>
</feature>
<feature type="binding site" evidence="1">
    <location>
        <begin position="110"/>
        <end position="115"/>
    </location>
    <ligand>
        <name>dCTP</name>
        <dbReference type="ChEBI" id="CHEBI:61481"/>
    </ligand>
</feature>
<feature type="binding site" evidence="1">
    <location>
        <position position="128"/>
    </location>
    <ligand>
        <name>dCTP</name>
        <dbReference type="ChEBI" id="CHEBI:61481"/>
    </ligand>
</feature>
<feature type="binding site" evidence="1">
    <location>
        <begin position="136"/>
        <end position="138"/>
    </location>
    <ligand>
        <name>dCTP</name>
        <dbReference type="ChEBI" id="CHEBI:61481"/>
    </ligand>
</feature>
<feature type="binding site" evidence="1">
    <location>
        <position position="171"/>
    </location>
    <ligand>
        <name>dCTP</name>
        <dbReference type="ChEBI" id="CHEBI:61481"/>
    </ligand>
</feature>
<feature type="binding site" evidence="1">
    <location>
        <position position="178"/>
    </location>
    <ligand>
        <name>dCTP</name>
        <dbReference type="ChEBI" id="CHEBI:61481"/>
    </ligand>
</feature>
<feature type="binding site" evidence="1">
    <location>
        <position position="182"/>
    </location>
    <ligand>
        <name>dCTP</name>
        <dbReference type="ChEBI" id="CHEBI:61481"/>
    </ligand>
</feature>
<name>DCD_ECOK1</name>
<keyword id="KW-0378">Hydrolase</keyword>
<keyword id="KW-0546">Nucleotide metabolism</keyword>
<keyword id="KW-0547">Nucleotide-binding</keyword>
<keyword id="KW-1185">Reference proteome</keyword>